<proteinExistence type="evidence at protein level"/>
<sequence length="142" mass="16370">LRPALQGVRASPCPKGWLDFRGNCYGYFRHELPWRKAQAWCRALRDGCHLASIHSAEEHRAIARFVSQCQRGEEEENVWIGLRQLVKLWAWSDGSKMRYSAWDDDEFTKGNYCAALEDSSGFLSWEDDSCGERNAFICKYAA</sequence>
<keyword id="KW-0903">Direct protein sequencing</keyword>
<keyword id="KW-1015">Disulfide bond</keyword>
<keyword id="KW-0272">Extracellular matrix</keyword>
<keyword id="KW-0430">Lectin</keyword>
<keyword id="KW-0964">Secreted</keyword>
<evidence type="ECO:0000250" key="1">
    <source>
        <dbReference type="UniProtKB" id="Q9PRS8"/>
    </source>
</evidence>
<evidence type="ECO:0000255" key="2">
    <source>
        <dbReference type="PROSITE-ProRule" id="PRU00040"/>
    </source>
</evidence>
<evidence type="ECO:0000269" key="3">
    <source>
    </source>
</evidence>
<evidence type="ECO:0000269" key="4">
    <source>
    </source>
</evidence>
<evidence type="ECO:0000305" key="5"/>
<comment type="subcellular location">
    <subcellularLocation>
        <location>Secreted</location>
        <location>Extracellular space</location>
        <location>Extracellular matrix</location>
    </subcellularLocation>
    <text>Eggshell matrix.</text>
</comment>
<comment type="mass spectrometry" mass="16365.6" method="Electrospray" evidence="4"/>
<organism>
    <name type="scientific">Dromaius novaehollandiae</name>
    <name type="common">Emu</name>
    <dbReference type="NCBI Taxonomy" id="8790"/>
    <lineage>
        <taxon>Eukaryota</taxon>
        <taxon>Metazoa</taxon>
        <taxon>Chordata</taxon>
        <taxon>Craniata</taxon>
        <taxon>Vertebrata</taxon>
        <taxon>Euteleostomi</taxon>
        <taxon>Archelosauria</taxon>
        <taxon>Archosauria</taxon>
        <taxon>Dinosauria</taxon>
        <taxon>Saurischia</taxon>
        <taxon>Theropoda</taxon>
        <taxon>Coelurosauria</taxon>
        <taxon>Aves</taxon>
        <taxon>Palaeognathae</taxon>
        <taxon>Casuariiformes</taxon>
        <taxon>Dromaiidae</taxon>
        <taxon>Dromaius</taxon>
    </lineage>
</organism>
<name>DCAL1_DRONO</name>
<reference key="1">
    <citation type="journal article" date="2006" name="Comp. Biochem. Physiol.">
        <title>Amino acid sequences and phosphorylation sites of emu and rhea eggshell C-type lectin-like proteins.</title>
        <authorList>
            <person name="Mann K."/>
            <person name="Siedler F."/>
        </authorList>
    </citation>
    <scope>PROTEIN SEQUENCE</scope>
    <scope>MASS SPECTROMETRY</scope>
    <source>
        <tissue>Eggshell matrix</tissue>
    </source>
</reference>
<reference evidence="5" key="2">
    <citation type="journal article" date="2004" name="Br. Poult. Sci.">
        <title>Identification of the major proteins of the organic matrix of emu (Dromaius novaehollandiae) and rhea (Rhea americana) eggshell calcified layer.</title>
        <authorList>
            <person name="Mann K."/>
        </authorList>
    </citation>
    <scope>PROTEIN SEQUENCE OF 1-37</scope>
    <source>
        <tissue evidence="3">Eggshell matrix</tissue>
    </source>
</reference>
<accession>P84615</accession>
<protein>
    <recommendedName>
        <fullName>Dromaiocalcin-1</fullName>
        <shortName>DCA-1</shortName>
    </recommendedName>
</protein>
<dbReference type="SMR" id="P84615"/>
<dbReference type="Proteomes" id="UP000694423">
    <property type="component" value="Unplaced"/>
</dbReference>
<dbReference type="GO" id="GO:0005576">
    <property type="term" value="C:extracellular region"/>
    <property type="evidence" value="ECO:0007669"/>
    <property type="project" value="UniProtKB-KW"/>
</dbReference>
<dbReference type="GO" id="GO:0030246">
    <property type="term" value="F:carbohydrate binding"/>
    <property type="evidence" value="ECO:0007669"/>
    <property type="project" value="UniProtKB-KW"/>
</dbReference>
<dbReference type="CDD" id="cd03594">
    <property type="entry name" value="CLECT_REG-1_like"/>
    <property type="match status" value="1"/>
</dbReference>
<dbReference type="FunFam" id="3.10.100.10:FF:000087">
    <property type="entry name" value="Snaclec rhodocetin subunit delta"/>
    <property type="match status" value="1"/>
</dbReference>
<dbReference type="Gene3D" id="3.10.100.10">
    <property type="entry name" value="Mannose-Binding Protein A, subunit A"/>
    <property type="match status" value="1"/>
</dbReference>
<dbReference type="InterPro" id="IPR001304">
    <property type="entry name" value="C-type_lectin-like"/>
</dbReference>
<dbReference type="InterPro" id="IPR016186">
    <property type="entry name" value="C-type_lectin-like/link_sf"/>
</dbReference>
<dbReference type="InterPro" id="IPR050111">
    <property type="entry name" value="C-type_lectin/snaclec_domain"/>
</dbReference>
<dbReference type="InterPro" id="IPR018378">
    <property type="entry name" value="C-type_lectin_CS"/>
</dbReference>
<dbReference type="InterPro" id="IPR016187">
    <property type="entry name" value="CTDL_fold"/>
</dbReference>
<dbReference type="PANTHER" id="PTHR22803">
    <property type="entry name" value="MANNOSE, PHOSPHOLIPASE, LECTIN RECEPTOR RELATED"/>
    <property type="match status" value="1"/>
</dbReference>
<dbReference type="Pfam" id="PF00059">
    <property type="entry name" value="Lectin_C"/>
    <property type="match status" value="1"/>
</dbReference>
<dbReference type="PRINTS" id="PR01504">
    <property type="entry name" value="PNCREATITSAP"/>
</dbReference>
<dbReference type="SMART" id="SM00034">
    <property type="entry name" value="CLECT"/>
    <property type="match status" value="1"/>
</dbReference>
<dbReference type="SUPFAM" id="SSF56436">
    <property type="entry name" value="C-type lectin-like"/>
    <property type="match status" value="1"/>
</dbReference>
<dbReference type="PROSITE" id="PS00615">
    <property type="entry name" value="C_TYPE_LECTIN_1"/>
    <property type="match status" value="1"/>
</dbReference>
<dbReference type="PROSITE" id="PS50041">
    <property type="entry name" value="C_TYPE_LECTIN_2"/>
    <property type="match status" value="1"/>
</dbReference>
<feature type="chain" id="PRO_0000046716" description="Dromaiocalcin-1">
    <location>
        <begin position="1"/>
        <end position="142"/>
    </location>
</feature>
<feature type="domain" description="C-type lectin" evidence="2">
    <location>
        <begin position="20"/>
        <end position="139"/>
    </location>
</feature>
<feature type="disulfide bond" evidence="1 2">
    <location>
        <begin position="13"/>
        <end position="24"/>
    </location>
</feature>
<feature type="disulfide bond" evidence="1 2">
    <location>
        <begin position="41"/>
        <end position="138"/>
    </location>
</feature>
<feature type="disulfide bond" evidence="1 2">
    <location>
        <begin position="113"/>
        <end position="130"/>
    </location>
</feature>